<reference key="1">
    <citation type="journal article" date="2014" name="Stand. Genomic Sci.">
        <title>Complete genome sequence of Burkholderia phymatum STM815(T), a broad host range and efficient nitrogen-fixing symbiont of Mimosa species.</title>
        <authorList>
            <person name="Moulin L."/>
            <person name="Klonowska A."/>
            <person name="Caroline B."/>
            <person name="Booth K."/>
            <person name="Vriezen J.A."/>
            <person name="Melkonian R."/>
            <person name="James E.K."/>
            <person name="Young J.P."/>
            <person name="Bena G."/>
            <person name="Hauser L."/>
            <person name="Land M."/>
            <person name="Kyrpides N."/>
            <person name="Bruce D."/>
            <person name="Chain P."/>
            <person name="Copeland A."/>
            <person name="Pitluck S."/>
            <person name="Woyke T."/>
            <person name="Lizotte-Waniewski M."/>
            <person name="Bristow J."/>
            <person name="Riley M."/>
        </authorList>
    </citation>
    <scope>NUCLEOTIDE SEQUENCE [LARGE SCALE GENOMIC DNA]</scope>
    <source>
        <strain>DSM 17167 / CIP 108236 / LMG 21445 / STM815</strain>
    </source>
</reference>
<accession>B2JC42</accession>
<proteinExistence type="inferred from homology"/>
<sequence length="89" mass="9932">MSPVNESLIDFPCDFPIKVMGKSHPDFQTTIVEVIRQFDGGFDAERVEVRPSSGGNYTGLTVTVRALNREHLDDIYRALTGHPMVKVVL</sequence>
<protein>
    <recommendedName>
        <fullName evidence="1">UPF0250 protein Bphy_0213</fullName>
    </recommendedName>
</protein>
<name>Y213_PARP8</name>
<feature type="chain" id="PRO_1000131237" description="UPF0250 protein Bphy_0213">
    <location>
        <begin position="1"/>
        <end position="89"/>
    </location>
</feature>
<comment type="similarity">
    <text evidence="1">Belongs to the UPF0250 family.</text>
</comment>
<evidence type="ECO:0000255" key="1">
    <source>
        <dbReference type="HAMAP-Rule" id="MF_00659"/>
    </source>
</evidence>
<organism>
    <name type="scientific">Paraburkholderia phymatum (strain DSM 17167 / CIP 108236 / LMG 21445 / STM815)</name>
    <name type="common">Burkholderia phymatum</name>
    <dbReference type="NCBI Taxonomy" id="391038"/>
    <lineage>
        <taxon>Bacteria</taxon>
        <taxon>Pseudomonadati</taxon>
        <taxon>Pseudomonadota</taxon>
        <taxon>Betaproteobacteria</taxon>
        <taxon>Burkholderiales</taxon>
        <taxon>Burkholderiaceae</taxon>
        <taxon>Paraburkholderia</taxon>
    </lineage>
</organism>
<gene>
    <name type="ordered locus">Bphy_0213</name>
</gene>
<keyword id="KW-1185">Reference proteome</keyword>
<dbReference type="EMBL" id="CP001043">
    <property type="protein sequence ID" value="ACC69406.1"/>
    <property type="molecule type" value="Genomic_DNA"/>
</dbReference>
<dbReference type="RefSeq" id="WP_012399635.1">
    <property type="nucleotide sequence ID" value="NZ_CADFGH010000001.1"/>
</dbReference>
<dbReference type="SMR" id="B2JC42"/>
<dbReference type="STRING" id="391038.Bphy_0213"/>
<dbReference type="KEGG" id="bph:Bphy_0213"/>
<dbReference type="eggNOG" id="COG2921">
    <property type="taxonomic scope" value="Bacteria"/>
</dbReference>
<dbReference type="HOGENOM" id="CLU_161438_1_2_4"/>
<dbReference type="OrthoDB" id="9793424at2"/>
<dbReference type="Proteomes" id="UP000001192">
    <property type="component" value="Chromosome 1"/>
</dbReference>
<dbReference type="Gene3D" id="3.30.70.260">
    <property type="match status" value="1"/>
</dbReference>
<dbReference type="HAMAP" id="MF_00659">
    <property type="entry name" value="UPF0250"/>
    <property type="match status" value="1"/>
</dbReference>
<dbReference type="InterPro" id="IPR007454">
    <property type="entry name" value="UPF0250_YbeD-like"/>
</dbReference>
<dbReference type="InterPro" id="IPR027471">
    <property type="entry name" value="YbeD-like_sf"/>
</dbReference>
<dbReference type="NCBIfam" id="NF002533">
    <property type="entry name" value="PRK02047.1"/>
    <property type="match status" value="1"/>
</dbReference>
<dbReference type="PANTHER" id="PTHR38036">
    <property type="entry name" value="UPF0250 PROTEIN YBED"/>
    <property type="match status" value="1"/>
</dbReference>
<dbReference type="PANTHER" id="PTHR38036:SF1">
    <property type="entry name" value="UPF0250 PROTEIN YBED"/>
    <property type="match status" value="1"/>
</dbReference>
<dbReference type="Pfam" id="PF04359">
    <property type="entry name" value="DUF493"/>
    <property type="match status" value="1"/>
</dbReference>
<dbReference type="SUPFAM" id="SSF117991">
    <property type="entry name" value="YbeD/HP0495-like"/>
    <property type="match status" value="1"/>
</dbReference>